<comment type="subcellular location">
    <subcellularLocation>
        <location evidence="1">Cell membrane</location>
        <topology evidence="1">Lipid-anchor</topology>
    </subcellularLocation>
</comment>
<comment type="similarity">
    <text evidence="2">Belongs to the staphylococcal tandem lipoprotein family.</text>
</comment>
<comment type="sequence caution" evidence="2">
    <conflict type="erroneous termination">
        <sequence resource="EMBL-CDS" id="AAW38725"/>
    </conflict>
    <text>Truncated C-terminus.</text>
</comment>
<comment type="sequence caution" evidence="2">
    <conflict type="erroneous termination">
        <sequence resource="EMBL-CDS" id="AAW38726"/>
    </conflict>
    <text>Truncated C-terminus.</text>
</comment>
<gene>
    <name type="ordered locus">SACOL0081/SACOL0082</name>
</gene>
<evidence type="ECO:0000255" key="1">
    <source>
        <dbReference type="PROSITE-ProRule" id="PRU00303"/>
    </source>
</evidence>
<evidence type="ECO:0000305" key="2"/>
<sequence>MKRLNKLVLGIIFLFLVISITAGCGIGKEAKIKKSFEKTLSMYPIKNLEDLYEKRRLFVMTKFDKNDKGTWIIGSEMATQNKGEALKVKGMVLYMNRNTKTTKGYYYVNAIKNDKDGRPQENEKRYPVKMVDNKIIPTKEIKDKNIKKEIENFKFFVQYGNFKDLSKYKDGDISYNPEVPSYSAKYQLTNDDYNVKQLRKRYDIPTNKAPKLLLKGTGNLKGSSVGYKDIEFTFVEKKEENIYFSDGLIFKPSEDK</sequence>
<name>Y081_STAAC</name>
<dbReference type="EMBL" id="CP000046">
    <property type="protein sequence ID" value="AAW38725.1"/>
    <property type="status" value="ALT_SEQ"/>
    <property type="molecule type" value="Genomic_DNA"/>
</dbReference>
<dbReference type="EMBL" id="CP000046">
    <property type="protein sequence ID" value="AAW38726.1"/>
    <property type="status" value="ALT_SEQ"/>
    <property type="molecule type" value="Genomic_DNA"/>
</dbReference>
<dbReference type="SMR" id="Q5HJS0"/>
<dbReference type="KEGG" id="sac:SACOL0081"/>
<dbReference type="KEGG" id="sac:SACOL0082"/>
<dbReference type="HOGENOM" id="CLU_071589_3_2_9"/>
<dbReference type="Proteomes" id="UP000000530">
    <property type="component" value="Chromosome"/>
</dbReference>
<dbReference type="GO" id="GO:0005886">
    <property type="term" value="C:plasma membrane"/>
    <property type="evidence" value="ECO:0007669"/>
    <property type="project" value="UniProtKB-SubCell"/>
</dbReference>
<dbReference type="Gene3D" id="2.50.20.40">
    <property type="match status" value="1"/>
</dbReference>
<dbReference type="InterPro" id="IPR007595">
    <property type="entry name" value="Csa"/>
</dbReference>
<dbReference type="InterPro" id="IPR038641">
    <property type="entry name" value="Csa_sf"/>
</dbReference>
<dbReference type="NCBIfam" id="TIGR01742">
    <property type="entry name" value="SA_tandem_lipo"/>
    <property type="match status" value="1"/>
</dbReference>
<dbReference type="Pfam" id="PF04507">
    <property type="entry name" value="DUF576"/>
    <property type="match status" value="1"/>
</dbReference>
<dbReference type="PROSITE" id="PS51257">
    <property type="entry name" value="PROKAR_LIPOPROTEIN"/>
    <property type="match status" value="1"/>
</dbReference>
<protein>
    <recommendedName>
        <fullName>Uncharacterized lipoprotein SACOL0081/SACOL0082</fullName>
    </recommendedName>
</protein>
<feature type="signal peptide" evidence="1">
    <location>
        <begin position="1"/>
        <end position="23"/>
    </location>
</feature>
<feature type="chain" id="PRO_0000282103" description="Uncharacterized lipoprotein SACOL0081/SACOL0082">
    <location>
        <begin position="24"/>
        <end position="256"/>
    </location>
</feature>
<feature type="lipid moiety-binding region" description="N-palmitoyl cysteine" evidence="1">
    <location>
        <position position="24"/>
    </location>
</feature>
<feature type="lipid moiety-binding region" description="S-diacylglycerol cysteine" evidence="1">
    <location>
        <position position="24"/>
    </location>
</feature>
<keyword id="KW-1003">Cell membrane</keyword>
<keyword id="KW-0449">Lipoprotein</keyword>
<keyword id="KW-0472">Membrane</keyword>
<keyword id="KW-0564">Palmitate</keyword>
<keyword id="KW-0732">Signal</keyword>
<organism>
    <name type="scientific">Staphylococcus aureus (strain COL)</name>
    <dbReference type="NCBI Taxonomy" id="93062"/>
    <lineage>
        <taxon>Bacteria</taxon>
        <taxon>Bacillati</taxon>
        <taxon>Bacillota</taxon>
        <taxon>Bacilli</taxon>
        <taxon>Bacillales</taxon>
        <taxon>Staphylococcaceae</taxon>
        <taxon>Staphylococcus</taxon>
    </lineage>
</organism>
<proteinExistence type="inferred from homology"/>
<accession>Q5HJS0</accession>
<reference key="1">
    <citation type="journal article" date="2005" name="J. Bacteriol.">
        <title>Insights on evolution of virulence and resistance from the complete genome analysis of an early methicillin-resistant Staphylococcus aureus strain and a biofilm-producing methicillin-resistant Staphylococcus epidermidis strain.</title>
        <authorList>
            <person name="Gill S.R."/>
            <person name="Fouts D.E."/>
            <person name="Archer G.L."/>
            <person name="Mongodin E.F."/>
            <person name="DeBoy R.T."/>
            <person name="Ravel J."/>
            <person name="Paulsen I.T."/>
            <person name="Kolonay J.F."/>
            <person name="Brinkac L.M."/>
            <person name="Beanan M.J."/>
            <person name="Dodson R.J."/>
            <person name="Daugherty S.C."/>
            <person name="Madupu R."/>
            <person name="Angiuoli S.V."/>
            <person name="Durkin A.S."/>
            <person name="Haft D.H."/>
            <person name="Vamathevan J.J."/>
            <person name="Khouri H."/>
            <person name="Utterback T.R."/>
            <person name="Lee C."/>
            <person name="Dimitrov G."/>
            <person name="Jiang L."/>
            <person name="Qin H."/>
            <person name="Weidman J."/>
            <person name="Tran K."/>
            <person name="Kang K.H."/>
            <person name="Hance I.R."/>
            <person name="Nelson K.E."/>
            <person name="Fraser C.M."/>
        </authorList>
    </citation>
    <scope>NUCLEOTIDE SEQUENCE [LARGE SCALE GENOMIC DNA]</scope>
    <source>
        <strain>COL</strain>
    </source>
</reference>